<protein>
    <recommendedName>
        <fullName evidence="1">Holo-[acyl-carrier-protein] synthase</fullName>
        <shortName evidence="1">Holo-ACP synthase</shortName>
        <ecNumber evidence="1">2.7.8.7</ecNumber>
    </recommendedName>
    <alternativeName>
        <fullName evidence="1">4'-phosphopantetheinyl transferase AcpS</fullName>
    </alternativeName>
</protein>
<feature type="chain" id="PRO_0000175712" description="Holo-[acyl-carrier-protein] synthase">
    <location>
        <begin position="1"/>
        <end position="119"/>
    </location>
</feature>
<feature type="binding site" evidence="1">
    <location>
        <position position="8"/>
    </location>
    <ligand>
        <name>Mg(2+)</name>
        <dbReference type="ChEBI" id="CHEBI:18420"/>
    </ligand>
</feature>
<feature type="binding site" evidence="1">
    <location>
        <position position="58"/>
    </location>
    <ligand>
        <name>Mg(2+)</name>
        <dbReference type="ChEBI" id="CHEBI:18420"/>
    </ligand>
</feature>
<keyword id="KW-0963">Cytoplasm</keyword>
<keyword id="KW-0275">Fatty acid biosynthesis</keyword>
<keyword id="KW-0276">Fatty acid metabolism</keyword>
<keyword id="KW-0444">Lipid biosynthesis</keyword>
<keyword id="KW-0443">Lipid metabolism</keyword>
<keyword id="KW-0460">Magnesium</keyword>
<keyword id="KW-0479">Metal-binding</keyword>
<keyword id="KW-1185">Reference proteome</keyword>
<keyword id="KW-0808">Transferase</keyword>
<name>ACPS_STRMU</name>
<accession>Q8DSF3</accession>
<dbReference type="EC" id="2.7.8.7" evidence="1"/>
<dbReference type="EMBL" id="AE014133">
    <property type="protein sequence ID" value="AAN59458.1"/>
    <property type="molecule type" value="Genomic_DNA"/>
</dbReference>
<dbReference type="RefSeq" id="NP_722152.1">
    <property type="nucleotide sequence ID" value="NC_004350.2"/>
</dbReference>
<dbReference type="RefSeq" id="WP_002263463.1">
    <property type="nucleotide sequence ID" value="NC_004350.2"/>
</dbReference>
<dbReference type="SMR" id="Q8DSF3"/>
<dbReference type="STRING" id="210007.SMU_1835"/>
<dbReference type="GeneID" id="93858749"/>
<dbReference type="KEGG" id="smu:SMU_1835"/>
<dbReference type="PATRIC" id="fig|210007.7.peg.1638"/>
<dbReference type="eggNOG" id="COG0736">
    <property type="taxonomic scope" value="Bacteria"/>
</dbReference>
<dbReference type="HOGENOM" id="CLU_089696_1_2_9"/>
<dbReference type="OrthoDB" id="517356at2"/>
<dbReference type="PhylomeDB" id="Q8DSF3"/>
<dbReference type="Proteomes" id="UP000002512">
    <property type="component" value="Chromosome"/>
</dbReference>
<dbReference type="GO" id="GO:0005737">
    <property type="term" value="C:cytoplasm"/>
    <property type="evidence" value="ECO:0007669"/>
    <property type="project" value="UniProtKB-SubCell"/>
</dbReference>
<dbReference type="GO" id="GO:0008897">
    <property type="term" value="F:holo-[acyl-carrier-protein] synthase activity"/>
    <property type="evidence" value="ECO:0007669"/>
    <property type="project" value="UniProtKB-UniRule"/>
</dbReference>
<dbReference type="GO" id="GO:0000287">
    <property type="term" value="F:magnesium ion binding"/>
    <property type="evidence" value="ECO:0007669"/>
    <property type="project" value="UniProtKB-UniRule"/>
</dbReference>
<dbReference type="GO" id="GO:0006633">
    <property type="term" value="P:fatty acid biosynthetic process"/>
    <property type="evidence" value="ECO:0007669"/>
    <property type="project" value="UniProtKB-UniRule"/>
</dbReference>
<dbReference type="Gene3D" id="3.90.470.20">
    <property type="entry name" value="4'-phosphopantetheinyl transferase domain"/>
    <property type="match status" value="1"/>
</dbReference>
<dbReference type="HAMAP" id="MF_00101">
    <property type="entry name" value="AcpS"/>
    <property type="match status" value="1"/>
</dbReference>
<dbReference type="InterPro" id="IPR008278">
    <property type="entry name" value="4-PPantetheinyl_Trfase_dom"/>
</dbReference>
<dbReference type="InterPro" id="IPR037143">
    <property type="entry name" value="4-PPantetheinyl_Trfase_dom_sf"/>
</dbReference>
<dbReference type="InterPro" id="IPR002582">
    <property type="entry name" value="ACPS"/>
</dbReference>
<dbReference type="InterPro" id="IPR004568">
    <property type="entry name" value="Ppantetheine-prot_Trfase_dom"/>
</dbReference>
<dbReference type="NCBIfam" id="TIGR00516">
    <property type="entry name" value="acpS"/>
    <property type="match status" value="1"/>
</dbReference>
<dbReference type="NCBIfam" id="TIGR00556">
    <property type="entry name" value="pantethn_trn"/>
    <property type="match status" value="1"/>
</dbReference>
<dbReference type="Pfam" id="PF01648">
    <property type="entry name" value="ACPS"/>
    <property type="match status" value="1"/>
</dbReference>
<dbReference type="SUPFAM" id="SSF56214">
    <property type="entry name" value="4'-phosphopantetheinyl transferase"/>
    <property type="match status" value="1"/>
</dbReference>
<reference key="1">
    <citation type="journal article" date="2002" name="Proc. Natl. Acad. Sci. U.S.A.">
        <title>Genome sequence of Streptococcus mutans UA159, a cariogenic dental pathogen.</title>
        <authorList>
            <person name="Ajdic D.J."/>
            <person name="McShan W.M."/>
            <person name="McLaughlin R.E."/>
            <person name="Savic G."/>
            <person name="Chang J."/>
            <person name="Carson M.B."/>
            <person name="Primeaux C."/>
            <person name="Tian R."/>
            <person name="Kenton S."/>
            <person name="Jia H.G."/>
            <person name="Lin S.P."/>
            <person name="Qian Y."/>
            <person name="Li S."/>
            <person name="Zhu H."/>
            <person name="Najar F.Z."/>
            <person name="Lai H."/>
            <person name="White J."/>
            <person name="Roe B.A."/>
            <person name="Ferretti J.J."/>
        </authorList>
    </citation>
    <scope>NUCLEOTIDE SEQUENCE [LARGE SCALE GENOMIC DNA]</scope>
    <source>
        <strain>ATCC 700610 / UA159</strain>
    </source>
</reference>
<gene>
    <name evidence="1" type="primary">acpS</name>
    <name type="ordered locus">SMU_1835</name>
</gene>
<organism>
    <name type="scientific">Streptococcus mutans serotype c (strain ATCC 700610 / UA159)</name>
    <dbReference type="NCBI Taxonomy" id="210007"/>
    <lineage>
        <taxon>Bacteria</taxon>
        <taxon>Bacillati</taxon>
        <taxon>Bacillota</taxon>
        <taxon>Bacilli</taxon>
        <taxon>Lactobacillales</taxon>
        <taxon>Streptococcaceae</taxon>
        <taxon>Streptococcus</taxon>
    </lineage>
</organism>
<sequence>MIIGHGIDLQDIAAVQRAHERSSRFASKVLTFKELEIFTSLKGRRQVEYLAGRWAAKEAFSKAYGSGIGSLRFQDLEILANNKGAPIFTKSPFSGNIFISISHSKNYVEASVILEENNL</sequence>
<evidence type="ECO:0000255" key="1">
    <source>
        <dbReference type="HAMAP-Rule" id="MF_00101"/>
    </source>
</evidence>
<comment type="function">
    <text evidence="1">Transfers the 4'-phosphopantetheine moiety from coenzyme A to a Ser of acyl-carrier-protein.</text>
</comment>
<comment type="catalytic activity">
    <reaction evidence="1">
        <text>apo-[ACP] + CoA = holo-[ACP] + adenosine 3',5'-bisphosphate + H(+)</text>
        <dbReference type="Rhea" id="RHEA:12068"/>
        <dbReference type="Rhea" id="RHEA-COMP:9685"/>
        <dbReference type="Rhea" id="RHEA-COMP:9690"/>
        <dbReference type="ChEBI" id="CHEBI:15378"/>
        <dbReference type="ChEBI" id="CHEBI:29999"/>
        <dbReference type="ChEBI" id="CHEBI:57287"/>
        <dbReference type="ChEBI" id="CHEBI:58343"/>
        <dbReference type="ChEBI" id="CHEBI:64479"/>
        <dbReference type="EC" id="2.7.8.7"/>
    </reaction>
</comment>
<comment type="cofactor">
    <cofactor evidence="1">
        <name>Mg(2+)</name>
        <dbReference type="ChEBI" id="CHEBI:18420"/>
    </cofactor>
</comment>
<comment type="subcellular location">
    <subcellularLocation>
        <location evidence="1">Cytoplasm</location>
    </subcellularLocation>
</comment>
<comment type="similarity">
    <text evidence="1">Belongs to the P-Pant transferase superfamily. AcpS family.</text>
</comment>
<proteinExistence type="inferred from homology"/>